<evidence type="ECO:0000250" key="1"/>
<evidence type="ECO:0000250" key="2">
    <source>
        <dbReference type="UniProtKB" id="P29473"/>
    </source>
</evidence>
<evidence type="ECO:0000250" key="3">
    <source>
        <dbReference type="UniProtKB" id="P29474"/>
    </source>
</evidence>
<evidence type="ECO:0000250" key="4">
    <source>
        <dbReference type="UniProtKB" id="P29476"/>
    </source>
</evidence>
<evidence type="ECO:0000250" key="5">
    <source>
        <dbReference type="UniProtKB" id="P35228"/>
    </source>
</evidence>
<evidence type="ECO:0000250" key="6">
    <source>
        <dbReference type="UniProtKB" id="P70313"/>
    </source>
</evidence>
<evidence type="ECO:0000256" key="7">
    <source>
        <dbReference type="SAM" id="MobiDB-lite"/>
    </source>
</evidence>
<evidence type="ECO:0000305" key="8"/>
<organism>
    <name type="scientific">Ovis aries</name>
    <name type="common">Sheep</name>
    <dbReference type="NCBI Taxonomy" id="9940"/>
    <lineage>
        <taxon>Eukaryota</taxon>
        <taxon>Metazoa</taxon>
        <taxon>Chordata</taxon>
        <taxon>Craniata</taxon>
        <taxon>Vertebrata</taxon>
        <taxon>Euteleostomi</taxon>
        <taxon>Mammalia</taxon>
        <taxon>Eutheria</taxon>
        <taxon>Laurasiatheria</taxon>
        <taxon>Artiodactyla</taxon>
        <taxon>Ruminantia</taxon>
        <taxon>Pecora</taxon>
        <taxon>Bovidae</taxon>
        <taxon>Caprinae</taxon>
        <taxon>Ovis</taxon>
    </lineage>
</organism>
<feature type="initiator methionine" description="Removed" evidence="2">
    <location>
        <position position="1"/>
    </location>
</feature>
<feature type="chain" id="PRO_0000170947" description="Nitric oxide synthase 3">
    <location>
        <begin position="2"/>
        <end position="1205"/>
    </location>
</feature>
<feature type="region of interest" description="Disordered" evidence="7">
    <location>
        <begin position="1"/>
        <end position="20"/>
    </location>
</feature>
<feature type="region of interest" description="Disordered" evidence="7">
    <location>
        <begin position="26"/>
        <end position="73"/>
    </location>
</feature>
<feature type="region of interest" description="Interaction with NOSIP" evidence="3">
    <location>
        <begin position="100"/>
        <end position="489"/>
    </location>
</feature>
<feature type="region of interest" description="Disordered" evidence="7">
    <location>
        <begin position="796"/>
        <end position="850"/>
    </location>
</feature>
<feature type="compositionally biased region" description="Pro residues" evidence="7">
    <location>
        <begin position="33"/>
        <end position="47"/>
    </location>
</feature>
<feature type="compositionally biased region" description="Pro residues" evidence="7">
    <location>
        <begin position="833"/>
        <end position="844"/>
    </location>
</feature>
<feature type="binding site" evidence="3">
    <location>
        <position position="96"/>
    </location>
    <ligand>
        <name>Zn(2+)</name>
        <dbReference type="ChEBI" id="CHEBI:29105"/>
        <note>ligand shared between homodimeric partners</note>
    </ligand>
</feature>
<feature type="binding site" evidence="3">
    <location>
        <position position="101"/>
    </location>
    <ligand>
        <name>Zn(2+)</name>
        <dbReference type="ChEBI" id="CHEBI:29105"/>
        <note>ligand shared between homodimeric partners</note>
    </ligand>
</feature>
<feature type="binding site" evidence="3">
    <location>
        <position position="104"/>
    </location>
    <ligand>
        <name>(6R)-L-erythro-5,6,7,8-tetrahydrobiopterin</name>
        <dbReference type="ChEBI" id="CHEBI:59560"/>
    </ligand>
</feature>
<feature type="binding site" description="axial binding residue" evidence="3">
    <location>
        <position position="186"/>
    </location>
    <ligand>
        <name>heme b</name>
        <dbReference type="ChEBI" id="CHEBI:60344"/>
    </ligand>
    <ligandPart>
        <name>Fe</name>
        <dbReference type="ChEBI" id="CHEBI:18248"/>
    </ligandPart>
</feature>
<feature type="binding site" evidence="3">
    <location>
        <position position="250"/>
    </location>
    <ligand>
        <name>L-arginine</name>
        <dbReference type="ChEBI" id="CHEBI:32682"/>
    </ligand>
</feature>
<feature type="binding site" evidence="3">
    <location>
        <position position="359"/>
    </location>
    <ligand>
        <name>L-arginine</name>
        <dbReference type="ChEBI" id="CHEBI:32682"/>
    </ligand>
</feature>
<feature type="binding site" evidence="3">
    <location>
        <position position="360"/>
    </location>
    <ligand>
        <name>L-arginine</name>
        <dbReference type="ChEBI" id="CHEBI:32682"/>
    </ligand>
</feature>
<feature type="binding site" evidence="3">
    <location>
        <position position="364"/>
    </location>
    <ligand>
        <name>L-arginine</name>
        <dbReference type="ChEBI" id="CHEBI:32682"/>
    </ligand>
</feature>
<feature type="binding site" evidence="3">
    <location>
        <position position="368"/>
    </location>
    <ligand>
        <name>(6R)-L-erythro-5,6,7,8-tetrahydrobiopterin</name>
        <dbReference type="ChEBI" id="CHEBI:59560"/>
    </ligand>
</feature>
<feature type="binding site" evidence="3">
    <location>
        <position position="369"/>
    </location>
    <ligand>
        <name>L-arginine</name>
        <dbReference type="ChEBI" id="CHEBI:32682"/>
    </ligand>
</feature>
<feature type="binding site" evidence="3">
    <location>
        <position position="449"/>
    </location>
    <ligand>
        <name>(6R)-L-erythro-5,6,7,8-tetrahydrobiopterin</name>
        <dbReference type="ChEBI" id="CHEBI:59560"/>
    </ligand>
</feature>
<feature type="binding site" evidence="3">
    <location>
        <position position="450"/>
    </location>
    <ligand>
        <name>(6R)-L-erythro-5,6,7,8-tetrahydrobiopterin</name>
        <dbReference type="ChEBI" id="CHEBI:59560"/>
    </ligand>
</feature>
<feature type="binding site" evidence="3">
    <location>
        <position position="463"/>
    </location>
    <ligand>
        <name>(6R)-L-erythro-5,6,7,8-tetrahydrobiopterin</name>
        <dbReference type="ChEBI" id="CHEBI:59560"/>
    </ligand>
</feature>
<feature type="binding site" evidence="3">
    <location>
        <position position="478"/>
    </location>
    <ligand>
        <name>heme b</name>
        <dbReference type="ChEBI" id="CHEBI:60344"/>
    </ligand>
</feature>
<feature type="binding site" evidence="5">
    <location>
        <position position="529"/>
    </location>
    <ligand>
        <name>FMN</name>
        <dbReference type="ChEBI" id="CHEBI:58210"/>
    </ligand>
</feature>
<feature type="binding site" evidence="5">
    <location>
        <position position="530"/>
    </location>
    <ligand>
        <name>FMN</name>
        <dbReference type="ChEBI" id="CHEBI:58210"/>
    </ligand>
</feature>
<feature type="binding site" evidence="5">
    <location>
        <position position="531"/>
    </location>
    <ligand>
        <name>FMN</name>
        <dbReference type="ChEBI" id="CHEBI:58210"/>
    </ligand>
</feature>
<feature type="binding site" evidence="5">
    <location>
        <position position="533"/>
    </location>
    <ligand>
        <name>FMN</name>
        <dbReference type="ChEBI" id="CHEBI:58210"/>
    </ligand>
</feature>
<feature type="binding site" evidence="5">
    <location>
        <position position="575"/>
    </location>
    <ligand>
        <name>FMN</name>
        <dbReference type="ChEBI" id="CHEBI:58210"/>
    </ligand>
</feature>
<feature type="binding site" evidence="5">
    <location>
        <position position="576"/>
    </location>
    <ligand>
        <name>FMN</name>
        <dbReference type="ChEBI" id="CHEBI:58210"/>
    </ligand>
</feature>
<feature type="binding site" evidence="5">
    <location>
        <position position="657"/>
    </location>
    <ligand>
        <name>FMN</name>
        <dbReference type="ChEBI" id="CHEBI:58210"/>
    </ligand>
</feature>
<feature type="binding site" evidence="5">
    <location>
        <position position="664"/>
    </location>
    <ligand>
        <name>FMN</name>
        <dbReference type="ChEBI" id="CHEBI:58210"/>
    </ligand>
</feature>
<feature type="binding site" evidence="5">
    <location>
        <position position="690"/>
    </location>
    <ligand>
        <name>FMN</name>
        <dbReference type="ChEBI" id="CHEBI:58210"/>
    </ligand>
</feature>
<feature type="binding site" evidence="5">
    <location>
        <position position="694"/>
    </location>
    <ligand>
        <name>FMN</name>
        <dbReference type="ChEBI" id="CHEBI:58210"/>
    </ligand>
</feature>
<feature type="binding site" evidence="4">
    <location>
        <position position="781"/>
    </location>
    <ligand>
        <name>NADP(+)</name>
        <dbReference type="ChEBI" id="CHEBI:58349"/>
    </ligand>
</feature>
<feature type="binding site" evidence="4">
    <location>
        <position position="803"/>
    </location>
    <ligand>
        <name>FAD</name>
        <dbReference type="ChEBI" id="CHEBI:57692"/>
    </ligand>
</feature>
<feature type="binding site" evidence="4">
    <location>
        <position position="939"/>
    </location>
    <ligand>
        <name>FAD</name>
        <dbReference type="ChEBI" id="CHEBI:57692"/>
    </ligand>
</feature>
<feature type="binding site" evidence="4">
    <location>
        <position position="941"/>
    </location>
    <ligand>
        <name>FAD</name>
        <dbReference type="ChEBI" id="CHEBI:57692"/>
    </ligand>
</feature>
<feature type="binding site" evidence="4">
    <location>
        <position position="942"/>
    </location>
    <ligand>
        <name>FAD</name>
        <dbReference type="ChEBI" id="CHEBI:57692"/>
    </ligand>
</feature>
<feature type="binding site" evidence="4">
    <location>
        <position position="957"/>
    </location>
    <ligand>
        <name>FAD</name>
        <dbReference type="ChEBI" id="CHEBI:57692"/>
    </ligand>
</feature>
<feature type="binding site" evidence="4">
    <location>
        <position position="959"/>
    </location>
    <ligand>
        <name>FAD</name>
        <dbReference type="ChEBI" id="CHEBI:57692"/>
    </ligand>
</feature>
<feature type="binding site" evidence="4">
    <location>
        <position position="1018"/>
    </location>
    <ligand>
        <name>NADP(+)</name>
        <dbReference type="ChEBI" id="CHEBI:58349"/>
    </ligand>
</feature>
<feature type="binding site" evidence="4">
    <location>
        <position position="1051"/>
    </location>
    <ligand>
        <name>NADP(+)</name>
        <dbReference type="ChEBI" id="CHEBI:58349"/>
    </ligand>
</feature>
<feature type="binding site" evidence="4">
    <location>
        <position position="1080"/>
    </location>
    <ligand>
        <name>NADP(+)</name>
        <dbReference type="ChEBI" id="CHEBI:58349"/>
    </ligand>
</feature>
<feature type="binding site" evidence="4">
    <location>
        <position position="1081"/>
    </location>
    <ligand>
        <name>NADP(+)</name>
        <dbReference type="ChEBI" id="CHEBI:58349"/>
    </ligand>
</feature>
<feature type="binding site" evidence="4">
    <location>
        <position position="1087"/>
    </location>
    <ligand>
        <name>NADP(+)</name>
        <dbReference type="ChEBI" id="CHEBI:58349"/>
    </ligand>
</feature>
<feature type="binding site" evidence="4">
    <location>
        <position position="1089"/>
    </location>
    <ligand>
        <name>NADP(+)</name>
        <dbReference type="ChEBI" id="CHEBI:58349"/>
    </ligand>
</feature>
<feature type="binding site" evidence="4">
    <location>
        <position position="1091"/>
    </location>
    <ligand>
        <name>NADP(+)</name>
        <dbReference type="ChEBI" id="CHEBI:58349"/>
    </ligand>
</feature>
<feature type="modified residue" description="Phosphoserine" evidence="3">
    <location>
        <position position="116"/>
    </location>
</feature>
<feature type="modified residue" description="Phosphothreonine" evidence="3">
    <location>
        <position position="498"/>
    </location>
</feature>
<feature type="modified residue" description="Phosphoserine" evidence="6">
    <location>
        <position position="618"/>
    </location>
</feature>
<feature type="modified residue" description="Phosphoserine" evidence="3">
    <location>
        <position position="636"/>
    </location>
</feature>
<feature type="modified residue" description="Phosphoserine" evidence="3">
    <location>
        <position position="641"/>
    </location>
</feature>
<feature type="modified residue" description="Phosphothreonine" evidence="6">
    <location>
        <position position="1177"/>
    </location>
</feature>
<feature type="modified residue" description="Phosphoserine" evidence="3">
    <location>
        <position position="1179"/>
    </location>
</feature>
<feature type="modified residue" description="Phosphoserine" evidence="6">
    <location>
        <position position="1181"/>
    </location>
</feature>
<feature type="sequence conflict" description="In Ref. 2; AAB40705." evidence="8" ref="2">
    <original>M</original>
    <variation>L</variation>
    <location>
        <position position="396"/>
    </location>
</feature>
<feature type="sequence conflict" description="In Ref. 2; AAB40705." evidence="8" ref="2">
    <original>PP</original>
    <variation>LA</variation>
    <location>
        <begin position="415"/>
        <end position="416"/>
    </location>
</feature>
<accession>P79209</accession>
<accession>W5NV95</accession>
<comment type="function">
    <text evidence="3">Produces nitric oxide (NO) which is implicated in vascular smooth muscle relaxation through a cGMP-mediated signal transduction pathway. NO mediates vascular endothelial growth factor (VEGF)-induced angiogenesis in coronary vessels and promotes blood clotting through the activation of platelets (By similarity).</text>
</comment>
<comment type="catalytic activity">
    <reaction evidence="3">
        <text>2 L-arginine + 3 NADPH + 4 O2 + H(+) = 2 L-citrulline + 2 nitric oxide + 3 NADP(+) + 4 H2O</text>
        <dbReference type="Rhea" id="RHEA:19897"/>
        <dbReference type="ChEBI" id="CHEBI:15377"/>
        <dbReference type="ChEBI" id="CHEBI:15378"/>
        <dbReference type="ChEBI" id="CHEBI:15379"/>
        <dbReference type="ChEBI" id="CHEBI:16480"/>
        <dbReference type="ChEBI" id="CHEBI:32682"/>
        <dbReference type="ChEBI" id="CHEBI:57743"/>
        <dbReference type="ChEBI" id="CHEBI:57783"/>
        <dbReference type="ChEBI" id="CHEBI:58349"/>
        <dbReference type="EC" id="1.14.13.39"/>
    </reaction>
    <physiologicalReaction direction="left-to-right" evidence="3">
        <dbReference type="Rhea" id="RHEA:19898"/>
    </physiologicalReaction>
</comment>
<comment type="cofactor">
    <cofactor evidence="3">
        <name>heme b</name>
        <dbReference type="ChEBI" id="CHEBI:60344"/>
    </cofactor>
</comment>
<comment type="cofactor">
    <cofactor evidence="4">
        <name>FAD</name>
        <dbReference type="ChEBI" id="CHEBI:57692"/>
    </cofactor>
    <text evidence="4">Binds 1 FAD.</text>
</comment>
<comment type="cofactor">
    <cofactor evidence="5">
        <name>FMN</name>
        <dbReference type="ChEBI" id="CHEBI:58210"/>
    </cofactor>
    <text evidence="5">Binds 1 FMN.</text>
</comment>
<comment type="cofactor">
    <cofactor evidence="5">
        <name>(6R)-L-erythro-5,6,7,8-tetrahydrobiopterin</name>
        <dbReference type="ChEBI" id="CHEBI:59560"/>
    </cofactor>
    <text evidence="5">Tetrahydrobiopterin (BH4). May stabilize the dimeric form of the enzyme.</text>
</comment>
<comment type="activity regulation">
    <text evidence="1">Stimulated by calcium/calmodulin. Inhibited by NOSIP and NOSTRIN (By similarity).</text>
</comment>
<comment type="subunit">
    <text evidence="3 6">Homodimer. Interacts with NOSIP and NOSTRIN (By similarity). Interacts with HSP90AB1 (By similarity). Forms a complex with ASL, ASS1 and SLC7A1; the complex regulates cell-autonomous L-arginine synthesis and citrulline recycling while channeling extracellular L-arginine to nitric oxide synthesis pathway (By similarity).</text>
</comment>
<comment type="subcellular location">
    <subcellularLocation>
        <location evidence="1">Membrane</location>
        <location evidence="1">Caveola</location>
    </subcellularLocation>
    <subcellularLocation>
        <location evidence="1">Cytoplasm</location>
        <location evidence="1">Cytoskeleton</location>
    </subcellularLocation>
    <subcellularLocation>
        <location evidence="1">Golgi apparatus</location>
    </subcellularLocation>
    <subcellularLocation>
        <location evidence="1">Cell membrane</location>
    </subcellularLocation>
    <text evidence="1">Specifically associates with actin cytoskeleton in the G2 phase of the cell cycle, which is favored by interaction with NOSIP and results in a reduced enzymatic activity.</text>
</comment>
<comment type="similarity">
    <text evidence="8">Belongs to the NOS family.</text>
</comment>
<sequence length="1205" mass="132978">MGNLKSVGQEPGPPCGLGLGLGFGLCGKQGPASPAPEPSWAPAPATPQAPDHSPAPSSPTLTRPPEGPKFPRVKNWELGSITYDTLCAQSQQDGPCTPRRCLGSLVLPRKLQTRPSQGPPPAEQLLSQARDFINQYYSSIKRSGSQAHEERLQEVEAEVASTGTYHLRESELVFGAKQAWRNAPRCVGRIQWGKLQVFDARDCSSAQEMFTYICNHIKYATNRGNLRLSAITVFPQRTPGRGDFRIWNTQLVRYAGYRQQDGSVRGDPANVEITELCIQHGWSPGNGRFDVLPLLLQAPDEAPELFVLPPELVLEVPLEHPTLEWFAALGLRWYALPAVSNMLLEIGGLEFPAAPFSGWYMSTEIGTRNLCDPHRYNILEDVAVCMDLDTRTTSSMWKDKAAVEINLAVLHSFQPPKVTIVDHHAATVSFMKHLENEQKARGGCPADWAWIVPPISGSLTPVFHQEMVNYVLSPAFRYQPDPWKGSAAKGAGITRKKTFKEVANAVKISASLMGTLMAKRVKATILYASETGRAQSYAQQLGRLFRKAFDPRVLCMDEYDVVSLEHEALVLVVTSTFGNGDPPENGESFAAALMEMSGPYNSSPRPEQHRSYKIRFNSVSCSDPLVSSWRRKRKESSNTDSAGALGTLRFCVFGLGSRAYPHFCAFARAVDTRLEELGGERLGQLGQGGELRGQGEGFRGWGEGASRNAASCETFCVGEEAKAAAQDIFSPKRSWKRQRYRLSTQAEGLQLLPGLIHVHRRKMFQATVLSVENLQSSKSTRATILVRLDTAGQEGLQYQPGDHISPHPPPRSSHRPGQGGPRVAPFSERPLMPRTPPPGGPPPSWVRDPRLPPCTLRQALTFFLDITSPPSPRLLRLLSTLAEEPSEQQELETLSQDPRRYEEWKWFRCPTLLEVLEQFPSVALPAPLLLTQLPLLQPRYYSVSSAPSAHPGEVHLTVAVLALDTSRLCSPLHPAEVVKSGGVWGDKGGLTEGVLARAPSFRLPPDPYVPCILVGPGTGIAPFRGFWQERLHDIESKGLQRAAPTLVFGCRCSQLDHLYRDEVQDAQERGVFGRVLTAFSREPDSPKTYVQDILRTELAAEVHRVLCLERGHMFVCGDVTMATSVLQTVPRILATEGGMELDEAGDVIGVLRDQQRYHEDIFGLTLRTQEVTSRIRTQSFSLQERHLRGAVPWAFDPPGPDTPGP</sequence>
<reference key="1">
    <citation type="journal article" date="2010" name="Anim. Genet.">
        <title>The sheep genome reference sequence: a work in progress.</title>
        <authorList>
            <person name="Archibald A.L."/>
            <person name="Cockett N.E."/>
            <person name="Dalrymple B.P."/>
            <person name="Faraut T."/>
            <person name="Kijas J.W."/>
            <person name="Maddox J.F."/>
            <person name="McEwan J.C."/>
            <person name="Hutton Oddy V."/>
            <person name="Raadsma H.W."/>
            <person name="Wade C."/>
            <person name="Wang J."/>
            <person name="Wang W."/>
            <person name="Xun X."/>
        </authorList>
    </citation>
    <scope>NUCLEOTIDE SEQUENCE [LARGE SCALE GENOMIC DNA]</scope>
    <source>
        <strain>Texel</strain>
    </source>
</reference>
<reference key="2">
    <citation type="submission" date="1996-10" db="EMBL/GenBank/DDBJ databases">
        <title>Effect of hypoxia on the microvasculature of developing fetal brain of sheep: a studies on the expression pattern of constitutive forms of nitric oxide synthase.</title>
        <authorList>
            <person name="Aguan K."/>
            <person name="Weiner C.P."/>
        </authorList>
    </citation>
    <scope>NUCLEOTIDE SEQUENCE [MRNA] OF 382-480</scope>
    <source>
        <tissue>Endothelial cell</tissue>
    </source>
</reference>
<protein>
    <recommendedName>
        <fullName evidence="8">Nitric oxide synthase 3</fullName>
        <ecNumber evidence="3">1.14.13.39</ecNumber>
    </recommendedName>
    <alternativeName>
        <fullName>Constitutive NOS</fullName>
        <shortName>cNOS</shortName>
    </alternativeName>
    <alternativeName>
        <fullName>EC-NOS</fullName>
    </alternativeName>
    <alternativeName>
        <fullName>NOS type III</fullName>
        <shortName>NOSIII</shortName>
    </alternativeName>
    <alternativeName>
        <fullName evidence="8">Nitric oxide synthase, endothelial</fullName>
        <shortName evidence="8">Endothelial NOS</shortName>
        <shortName evidence="8">eNOS</shortName>
    </alternativeName>
</protein>
<dbReference type="EC" id="1.14.13.39" evidence="3"/>
<dbReference type="EMBL" id="AMGL01089902">
    <property type="status" value="NOT_ANNOTATED_CDS"/>
    <property type="molecule type" value="Genomic_DNA"/>
</dbReference>
<dbReference type="EMBL" id="AMGL01089903">
    <property type="status" value="NOT_ANNOTATED_CDS"/>
    <property type="molecule type" value="Genomic_DNA"/>
</dbReference>
<dbReference type="EMBL" id="AMGL01089904">
    <property type="status" value="NOT_ANNOTATED_CDS"/>
    <property type="molecule type" value="Genomic_DNA"/>
</dbReference>
<dbReference type="EMBL" id="AMGL01089905">
    <property type="status" value="NOT_ANNOTATED_CDS"/>
    <property type="molecule type" value="Genomic_DNA"/>
</dbReference>
<dbReference type="EMBL" id="U76738">
    <property type="protein sequence ID" value="AAB40705.1"/>
    <property type="molecule type" value="mRNA"/>
</dbReference>
<dbReference type="SMR" id="P79209"/>
<dbReference type="STRING" id="9940.ENSOARP00000002091"/>
<dbReference type="PaxDb" id="9940-ENSOARP00000002091"/>
<dbReference type="eggNOG" id="KOG1158">
    <property type="taxonomic scope" value="Eukaryota"/>
</dbReference>
<dbReference type="HOGENOM" id="CLU_001570_16_0_1"/>
<dbReference type="OMA" id="KGDFRIW"/>
<dbReference type="Proteomes" id="UP000002356">
    <property type="component" value="Chromosome 4"/>
</dbReference>
<dbReference type="Bgee" id="ENSOARG00000001979">
    <property type="expression patterns" value="Expressed in mitral valve and 48 other cell types or tissues"/>
</dbReference>
<dbReference type="GO" id="GO:0005901">
    <property type="term" value="C:caveola"/>
    <property type="evidence" value="ECO:0007669"/>
    <property type="project" value="UniProtKB-SubCell"/>
</dbReference>
<dbReference type="GO" id="GO:0005856">
    <property type="term" value="C:cytoskeleton"/>
    <property type="evidence" value="ECO:0007669"/>
    <property type="project" value="UniProtKB-SubCell"/>
</dbReference>
<dbReference type="GO" id="GO:0005794">
    <property type="term" value="C:Golgi apparatus"/>
    <property type="evidence" value="ECO:0007669"/>
    <property type="project" value="UniProtKB-SubCell"/>
</dbReference>
<dbReference type="GO" id="GO:0005516">
    <property type="term" value="F:calmodulin binding"/>
    <property type="evidence" value="ECO:0007669"/>
    <property type="project" value="UniProtKB-KW"/>
</dbReference>
<dbReference type="GO" id="GO:0050660">
    <property type="term" value="F:flavin adenine dinucleotide binding"/>
    <property type="evidence" value="ECO:0007669"/>
    <property type="project" value="InterPro"/>
</dbReference>
<dbReference type="GO" id="GO:0010181">
    <property type="term" value="F:FMN binding"/>
    <property type="evidence" value="ECO:0007669"/>
    <property type="project" value="InterPro"/>
</dbReference>
<dbReference type="GO" id="GO:0020037">
    <property type="term" value="F:heme binding"/>
    <property type="evidence" value="ECO:0007669"/>
    <property type="project" value="InterPro"/>
</dbReference>
<dbReference type="GO" id="GO:0046872">
    <property type="term" value="F:metal ion binding"/>
    <property type="evidence" value="ECO:0007669"/>
    <property type="project" value="UniProtKB-KW"/>
</dbReference>
<dbReference type="GO" id="GO:0050661">
    <property type="term" value="F:NADP binding"/>
    <property type="evidence" value="ECO:0007669"/>
    <property type="project" value="InterPro"/>
</dbReference>
<dbReference type="GO" id="GO:0004517">
    <property type="term" value="F:nitric-oxide synthase activity"/>
    <property type="evidence" value="ECO:0007669"/>
    <property type="project" value="UniProtKB-EC"/>
</dbReference>
<dbReference type="GO" id="GO:0006809">
    <property type="term" value="P:nitric oxide biosynthetic process"/>
    <property type="evidence" value="ECO:0007669"/>
    <property type="project" value="InterPro"/>
</dbReference>
<dbReference type="CDD" id="cd00795">
    <property type="entry name" value="NOS_oxygenase_euk"/>
    <property type="match status" value="1"/>
</dbReference>
<dbReference type="FunFam" id="3.90.440.10:FF:000001">
    <property type="entry name" value="Endothelial nitric oxide synthase"/>
    <property type="match status" value="1"/>
</dbReference>
<dbReference type="FunFam" id="1.20.990.10:FF:000005">
    <property type="entry name" value="Nitric oxide synthase"/>
    <property type="match status" value="1"/>
</dbReference>
<dbReference type="FunFam" id="3.40.50.360:FF:000003">
    <property type="entry name" value="Nitric oxide synthase"/>
    <property type="match status" value="1"/>
</dbReference>
<dbReference type="FunFam" id="3.40.50.80:FF:000003">
    <property type="entry name" value="Nitric oxide synthase"/>
    <property type="match status" value="1"/>
</dbReference>
<dbReference type="FunFam" id="3.90.1230.10:FF:000001">
    <property type="entry name" value="Nitric oxide synthase, brain"/>
    <property type="match status" value="1"/>
</dbReference>
<dbReference type="Gene3D" id="3.40.50.360">
    <property type="match status" value="1"/>
</dbReference>
<dbReference type="Gene3D" id="1.20.990.10">
    <property type="entry name" value="NADPH-cytochrome p450 Reductase, Chain A, domain 3"/>
    <property type="match status" value="1"/>
</dbReference>
<dbReference type="Gene3D" id="3.90.340.10">
    <property type="entry name" value="Nitric Oxide Synthase, Chain A, domain 1"/>
    <property type="match status" value="1"/>
</dbReference>
<dbReference type="Gene3D" id="3.90.1230.10">
    <property type="entry name" value="Nitric Oxide Synthase, Chain A, domain 3"/>
    <property type="match status" value="1"/>
</dbReference>
<dbReference type="Gene3D" id="3.90.440.10">
    <property type="entry name" value="Nitric Oxide Synthase,Heme Domain,Chain A domain 2"/>
    <property type="match status" value="1"/>
</dbReference>
<dbReference type="Gene3D" id="3.40.50.80">
    <property type="entry name" value="Nucleotide-binding domain of ferredoxin-NADP reductase (FNR) module"/>
    <property type="match status" value="1"/>
</dbReference>
<dbReference type="Gene3D" id="2.40.30.10">
    <property type="entry name" value="Translation factors"/>
    <property type="match status" value="1"/>
</dbReference>
<dbReference type="InterPro" id="IPR003097">
    <property type="entry name" value="CysJ-like_FAD-binding"/>
</dbReference>
<dbReference type="InterPro" id="IPR017927">
    <property type="entry name" value="FAD-bd_FR_type"/>
</dbReference>
<dbReference type="InterPro" id="IPR001094">
    <property type="entry name" value="Flavdoxin-like"/>
</dbReference>
<dbReference type="InterPro" id="IPR008254">
    <property type="entry name" value="Flavodoxin/NO_synth"/>
</dbReference>
<dbReference type="InterPro" id="IPR001709">
    <property type="entry name" value="Flavoprot_Pyr_Nucl_cyt_Rdtase"/>
</dbReference>
<dbReference type="InterPro" id="IPR029039">
    <property type="entry name" value="Flavoprotein-like_sf"/>
</dbReference>
<dbReference type="InterPro" id="IPR039261">
    <property type="entry name" value="FNR_nucleotide-bd"/>
</dbReference>
<dbReference type="InterPro" id="IPR023173">
    <property type="entry name" value="NADPH_Cyt_P450_Rdtase_alpha"/>
</dbReference>
<dbReference type="InterPro" id="IPR050607">
    <property type="entry name" value="NOS"/>
</dbReference>
<dbReference type="InterPro" id="IPR044943">
    <property type="entry name" value="NOS_dom_1"/>
</dbReference>
<dbReference type="InterPro" id="IPR044940">
    <property type="entry name" value="NOS_dom_2"/>
</dbReference>
<dbReference type="InterPro" id="IPR044944">
    <property type="entry name" value="NOS_dom_3"/>
</dbReference>
<dbReference type="InterPro" id="IPR012144">
    <property type="entry name" value="NOS_euk"/>
</dbReference>
<dbReference type="InterPro" id="IPR004030">
    <property type="entry name" value="NOS_N"/>
</dbReference>
<dbReference type="InterPro" id="IPR036119">
    <property type="entry name" value="NOS_N_sf"/>
</dbReference>
<dbReference type="InterPro" id="IPR001433">
    <property type="entry name" value="OxRdtase_FAD/NAD-bd"/>
</dbReference>
<dbReference type="InterPro" id="IPR017938">
    <property type="entry name" value="Riboflavin_synthase-like_b-brl"/>
</dbReference>
<dbReference type="PANTHER" id="PTHR43410:SF1">
    <property type="entry name" value="NITRIC OXIDE SYNTHASE"/>
    <property type="match status" value="1"/>
</dbReference>
<dbReference type="PANTHER" id="PTHR43410">
    <property type="entry name" value="NITRIC OXIDE SYNTHASE OXYGENASE"/>
    <property type="match status" value="1"/>
</dbReference>
<dbReference type="Pfam" id="PF00667">
    <property type="entry name" value="FAD_binding_1"/>
    <property type="match status" value="1"/>
</dbReference>
<dbReference type="Pfam" id="PF00258">
    <property type="entry name" value="Flavodoxin_1"/>
    <property type="match status" value="1"/>
</dbReference>
<dbReference type="Pfam" id="PF00175">
    <property type="entry name" value="NAD_binding_1"/>
    <property type="match status" value="1"/>
</dbReference>
<dbReference type="Pfam" id="PF02898">
    <property type="entry name" value="NO_synthase"/>
    <property type="match status" value="1"/>
</dbReference>
<dbReference type="PIRSF" id="PIRSF000333">
    <property type="entry name" value="NOS"/>
    <property type="match status" value="1"/>
</dbReference>
<dbReference type="PRINTS" id="PR00369">
    <property type="entry name" value="FLAVODOXIN"/>
</dbReference>
<dbReference type="PRINTS" id="PR00371">
    <property type="entry name" value="FPNCR"/>
</dbReference>
<dbReference type="SUPFAM" id="SSF52343">
    <property type="entry name" value="Ferredoxin reductase-like, C-terminal NADP-linked domain"/>
    <property type="match status" value="1"/>
</dbReference>
<dbReference type="SUPFAM" id="SSF52218">
    <property type="entry name" value="Flavoproteins"/>
    <property type="match status" value="1"/>
</dbReference>
<dbReference type="SUPFAM" id="SSF56512">
    <property type="entry name" value="Nitric oxide (NO) synthase oxygenase domain"/>
    <property type="match status" value="1"/>
</dbReference>
<dbReference type="SUPFAM" id="SSF63380">
    <property type="entry name" value="Riboflavin synthase domain-like"/>
    <property type="match status" value="1"/>
</dbReference>
<gene>
    <name type="primary">NOS3</name>
    <name type="synonym">ENOS</name>
</gene>
<name>NOS3_SHEEP</name>
<proteinExistence type="evidence at transcript level"/>
<keyword id="KW-0106">Calcium</keyword>
<keyword id="KW-0112">Calmodulin-binding</keyword>
<keyword id="KW-1003">Cell membrane</keyword>
<keyword id="KW-0963">Cytoplasm</keyword>
<keyword id="KW-0206">Cytoskeleton</keyword>
<keyword id="KW-0274">FAD</keyword>
<keyword id="KW-0285">Flavoprotein</keyword>
<keyword id="KW-0288">FMN</keyword>
<keyword id="KW-0333">Golgi apparatus</keyword>
<keyword id="KW-0349">Heme</keyword>
<keyword id="KW-0408">Iron</keyword>
<keyword id="KW-0472">Membrane</keyword>
<keyword id="KW-0479">Metal-binding</keyword>
<keyword id="KW-0521">NADP</keyword>
<keyword id="KW-0560">Oxidoreductase</keyword>
<keyword id="KW-0597">Phosphoprotein</keyword>
<keyword id="KW-1185">Reference proteome</keyword>
<keyword id="KW-0862">Zinc</keyword>